<dbReference type="EMBL" id="X53462">
    <property type="protein sequence ID" value="CAA37553.1"/>
    <property type="molecule type" value="Genomic_RNA"/>
</dbReference>
<dbReference type="EMBL" id="X73476">
    <property type="protein sequence ID" value="CAA51867.1"/>
    <property type="molecule type" value="Genomic_RNA"/>
</dbReference>
<dbReference type="PIR" id="S28714">
    <property type="entry name" value="S28714"/>
</dbReference>
<dbReference type="RefSeq" id="NP_041874.1">
    <property type="nucleotide sequence ID" value="NC_001598.1"/>
</dbReference>
<dbReference type="SMR" id="Q08538"/>
<dbReference type="KEGG" id="vg:1724790"/>
<dbReference type="Proteomes" id="UP000000359">
    <property type="component" value="Segment"/>
</dbReference>
<dbReference type="GO" id="GO:0019028">
    <property type="term" value="C:viral capsid"/>
    <property type="evidence" value="ECO:0007669"/>
    <property type="project" value="UniProtKB-KW"/>
</dbReference>
<dbReference type="GO" id="GO:0046740">
    <property type="term" value="P:transport of virus in host, cell to cell"/>
    <property type="evidence" value="ECO:0007669"/>
    <property type="project" value="UniProtKB-KW"/>
</dbReference>
<dbReference type="InterPro" id="IPR002679">
    <property type="entry name" value="Closter_coat"/>
</dbReference>
<dbReference type="Pfam" id="PF01785">
    <property type="entry name" value="Closter_coat"/>
    <property type="match status" value="1"/>
</dbReference>
<gene>
    <name type="ORF">ORF5</name>
</gene>
<keyword id="KW-0167">Capsid protein</keyword>
<keyword id="KW-1185">Reference proteome</keyword>
<keyword id="KW-0813">Transport</keyword>
<keyword id="KW-0916">Viral movement protein</keyword>
<keyword id="KW-0946">Virion</keyword>
<name>CPM_BYVU</name>
<organism>
    <name type="scientific">Beet yellows virus (isolate Ukraine)</name>
    <name type="common">BYV</name>
    <name type="synonym">Sugar beet yellows virus</name>
    <dbReference type="NCBI Taxonomy" id="478555"/>
    <lineage>
        <taxon>Viruses</taxon>
        <taxon>Riboviria</taxon>
        <taxon>Orthornavirae</taxon>
        <taxon>Kitrinoviricota</taxon>
        <taxon>Alsuviricetes</taxon>
        <taxon>Martellivirales</taxon>
        <taxon>Closteroviridae</taxon>
        <taxon>Closterovirus</taxon>
        <taxon>Beet yellows virus</taxon>
    </lineage>
</organism>
<accession>Q08538</accession>
<sequence>MLAPEARGDLIHFTENTRDAMETFFNSYDLAEYSEVNPNKLNRKETDELLGVIRERFKSELVITDEDFVKHLAFALIRAANITTSVKVNYVGAYEYTIGGKKFLVKDAWVFPLIKECMKKFNKPNPVRTFCATFEDAYIVIARSLPKLFLNRTIGKRGIPSGYEFLGADFLTATSVCLNDHEKAIVLQASRAAIDRAVSSSVDGKIVSLFDLGRLS</sequence>
<reference key="1">
    <citation type="journal article" date="1991" name="J. Gen. Virol.">
        <title>Nucleotide sequence of the 3'-terminal half of beet yellows closterovirus RNA genome: unique arrangement of eight virus genes.</title>
        <authorList>
            <person name="Agranovsky A.A."/>
            <person name="Boyko V.P."/>
            <person name="Karasev A.V."/>
            <person name="Lunina N.A."/>
            <person name="Koonin E.V."/>
            <person name="Dolja V.V."/>
        </authorList>
    </citation>
    <scope>NUCLEOTIDE SEQUENCE [GENOMIC RNA]</scope>
</reference>
<reference key="2">
    <citation type="journal article" date="1994" name="Virology">
        <title>Beet yellows closterovirus: complete genome structure and identification of a leader papain-like thiol protease.</title>
        <authorList>
            <person name="Agranovsky A.A."/>
            <person name="Koonin E.V."/>
            <person name="Boyko V.P."/>
            <person name="Maiss E."/>
            <person name="Froetschl R."/>
            <person name="Lunina N.A."/>
            <person name="Atabekov J.G."/>
        </authorList>
    </citation>
    <scope>NUCLEOTIDE SEQUENCE [GENOMIC RNA]</scope>
</reference>
<reference key="3">
    <citation type="journal article" date="1999" name="J. Gen. Virol.">
        <title>The minor coat protein of beet yellows closterovirus encapsidates the 5' terminus of RNA in virions.</title>
        <authorList>
            <person name="Zinovkin R.A."/>
            <person name="Jelkmann W."/>
            <person name="Agranovsky A.A."/>
        </authorList>
    </citation>
    <scope>FUNCTION</scope>
</reference>
<reference key="4">
    <citation type="journal article" date="2001" name="EMBO J.">
        <title>Cell-to-cell movement and assembly of a plant closterovirus: roles for the capsid proteins and Hsp70 homolog.</title>
        <authorList>
            <person name="Alzhanova D.V."/>
            <person name="Napuli A.J."/>
            <person name="Creamer R."/>
            <person name="Dolja V.V."/>
        </authorList>
    </citation>
    <scope>FUNCTION</scope>
</reference>
<reference key="5">
    <citation type="journal article" date="2007" name="Virology">
        <title>Virion tails of Beet yellows virus: coordinated assembly by three structural proteins.</title>
        <authorList>
            <person name="Alzhanova D.V."/>
            <person name="Prokhnevsky A.I."/>
            <person name="Peremyslov V.V."/>
            <person name="Dolja V.V."/>
        </authorList>
    </citation>
    <scope>FUNCTION</scope>
</reference>
<protein>
    <recommendedName>
        <fullName>Minor capsid protein</fullName>
    </recommendedName>
    <alternativeName>
        <fullName>CPm</fullName>
    </alternativeName>
    <alternativeName>
        <fullName>p24</fullName>
    </alternativeName>
</protein>
<feature type="chain" id="PRO_0000312567" description="Minor capsid protein">
    <location>
        <begin position="1"/>
        <end position="216"/>
    </location>
</feature>
<organismHost>
    <name type="scientific">Beta vulgaris</name>
    <name type="common">Sugar beet</name>
    <dbReference type="NCBI Taxonomy" id="161934"/>
</organismHost>
<evidence type="ECO:0000269" key="1">
    <source>
    </source>
</evidence>
<evidence type="ECO:0000269" key="2">
    <source>
    </source>
</evidence>
<evidence type="ECO:0000269" key="3">
    <source>
    </source>
</evidence>
<proteinExistence type="predicted"/>
<comment type="function">
    <text evidence="1 2 3">Component that constitutes the tail found at one end of the virion. Together with Hsp70h and p64, encapsidates the 5'-terminal portion of the viral genome. Movement protein that is involved in local cell-cell movement via plamodesmata. At least five viral proteins, CP, CPm, p6, p64 and Hsp70h are essential for cell-cell movement.</text>
</comment>
<comment type="subcellular location">
    <subcellularLocation>
        <location>Virion</location>
    </subcellularLocation>
    <text>Integral virion tail component.</text>
</comment>